<proteinExistence type="evidence at protein level"/>
<reference key="1">
    <citation type="journal article" date="2000" name="Nature">
        <title>Sequence and analysis of chromosome 3 of the plant Arabidopsis thaliana.</title>
        <authorList>
            <person name="Salanoubat M."/>
            <person name="Lemcke K."/>
            <person name="Rieger M."/>
            <person name="Ansorge W."/>
            <person name="Unseld M."/>
            <person name="Fartmann B."/>
            <person name="Valle G."/>
            <person name="Bloecker H."/>
            <person name="Perez-Alonso M."/>
            <person name="Obermaier B."/>
            <person name="Delseny M."/>
            <person name="Boutry M."/>
            <person name="Grivell L.A."/>
            <person name="Mache R."/>
            <person name="Puigdomenech P."/>
            <person name="De Simone V."/>
            <person name="Choisne N."/>
            <person name="Artiguenave F."/>
            <person name="Robert C."/>
            <person name="Brottier P."/>
            <person name="Wincker P."/>
            <person name="Cattolico L."/>
            <person name="Weissenbach J."/>
            <person name="Saurin W."/>
            <person name="Quetier F."/>
            <person name="Schaefer M."/>
            <person name="Mueller-Auer S."/>
            <person name="Gabel C."/>
            <person name="Fuchs M."/>
            <person name="Benes V."/>
            <person name="Wurmbach E."/>
            <person name="Drzonek H."/>
            <person name="Erfle H."/>
            <person name="Jordan N."/>
            <person name="Bangert S."/>
            <person name="Wiedelmann R."/>
            <person name="Kranz H."/>
            <person name="Voss H."/>
            <person name="Holland R."/>
            <person name="Brandt P."/>
            <person name="Nyakatura G."/>
            <person name="Vezzi A."/>
            <person name="D'Angelo M."/>
            <person name="Pallavicini A."/>
            <person name="Toppo S."/>
            <person name="Simionati B."/>
            <person name="Conrad A."/>
            <person name="Hornischer K."/>
            <person name="Kauer G."/>
            <person name="Loehnert T.-H."/>
            <person name="Nordsiek G."/>
            <person name="Reichelt J."/>
            <person name="Scharfe M."/>
            <person name="Schoen O."/>
            <person name="Bargues M."/>
            <person name="Terol J."/>
            <person name="Climent J."/>
            <person name="Navarro P."/>
            <person name="Collado C."/>
            <person name="Perez-Perez A."/>
            <person name="Ottenwaelder B."/>
            <person name="Duchemin D."/>
            <person name="Cooke R."/>
            <person name="Laudie M."/>
            <person name="Berger-Llauro C."/>
            <person name="Purnelle B."/>
            <person name="Masuy D."/>
            <person name="de Haan M."/>
            <person name="Maarse A.C."/>
            <person name="Alcaraz J.-P."/>
            <person name="Cottet A."/>
            <person name="Casacuberta E."/>
            <person name="Monfort A."/>
            <person name="Argiriou A."/>
            <person name="Flores M."/>
            <person name="Liguori R."/>
            <person name="Vitale D."/>
            <person name="Mannhaupt G."/>
            <person name="Haase D."/>
            <person name="Schoof H."/>
            <person name="Rudd S."/>
            <person name="Zaccaria P."/>
            <person name="Mewes H.-W."/>
            <person name="Mayer K.F.X."/>
            <person name="Kaul S."/>
            <person name="Town C.D."/>
            <person name="Koo H.L."/>
            <person name="Tallon L.J."/>
            <person name="Jenkins J."/>
            <person name="Rooney T."/>
            <person name="Rizzo M."/>
            <person name="Walts A."/>
            <person name="Utterback T."/>
            <person name="Fujii C.Y."/>
            <person name="Shea T.P."/>
            <person name="Creasy T.H."/>
            <person name="Haas B."/>
            <person name="Maiti R."/>
            <person name="Wu D."/>
            <person name="Peterson J."/>
            <person name="Van Aken S."/>
            <person name="Pai G."/>
            <person name="Militscher J."/>
            <person name="Sellers P."/>
            <person name="Gill J.E."/>
            <person name="Feldblyum T.V."/>
            <person name="Preuss D."/>
            <person name="Lin X."/>
            <person name="Nierman W.C."/>
            <person name="Salzberg S.L."/>
            <person name="White O."/>
            <person name="Venter J.C."/>
            <person name="Fraser C.M."/>
            <person name="Kaneko T."/>
            <person name="Nakamura Y."/>
            <person name="Sato S."/>
            <person name="Kato T."/>
            <person name="Asamizu E."/>
            <person name="Sasamoto S."/>
            <person name="Kimura T."/>
            <person name="Idesawa K."/>
            <person name="Kawashima K."/>
            <person name="Kishida Y."/>
            <person name="Kiyokawa C."/>
            <person name="Kohara M."/>
            <person name="Matsumoto M."/>
            <person name="Matsuno A."/>
            <person name="Muraki A."/>
            <person name="Nakayama S."/>
            <person name="Nakazaki N."/>
            <person name="Shinpo S."/>
            <person name="Takeuchi C."/>
            <person name="Wada T."/>
            <person name="Watanabe A."/>
            <person name="Yamada M."/>
            <person name="Yasuda M."/>
            <person name="Tabata S."/>
        </authorList>
    </citation>
    <scope>NUCLEOTIDE SEQUENCE [LARGE SCALE GENOMIC DNA]</scope>
    <source>
        <strain>cv. Columbia</strain>
    </source>
</reference>
<reference key="2">
    <citation type="journal article" date="2017" name="Plant J.">
        <title>Araport11: a complete reannotation of the Arabidopsis thaliana reference genome.</title>
        <authorList>
            <person name="Cheng C.Y."/>
            <person name="Krishnakumar V."/>
            <person name="Chan A.P."/>
            <person name="Thibaud-Nissen F."/>
            <person name="Schobel S."/>
            <person name="Town C.D."/>
        </authorList>
    </citation>
    <scope>GENOME REANNOTATION</scope>
    <source>
        <strain>cv. Columbia</strain>
    </source>
</reference>
<reference key="3">
    <citation type="journal article" date="2003" name="Science">
        <title>Empirical analysis of transcriptional activity in the Arabidopsis genome.</title>
        <authorList>
            <person name="Yamada K."/>
            <person name="Lim J."/>
            <person name="Dale J.M."/>
            <person name="Chen H."/>
            <person name="Shinn P."/>
            <person name="Palm C.J."/>
            <person name="Southwick A.M."/>
            <person name="Wu H.C."/>
            <person name="Kim C.J."/>
            <person name="Nguyen M."/>
            <person name="Pham P.K."/>
            <person name="Cheuk R.F."/>
            <person name="Karlin-Newmann G."/>
            <person name="Liu S.X."/>
            <person name="Lam B."/>
            <person name="Sakano H."/>
            <person name="Wu T."/>
            <person name="Yu G."/>
            <person name="Miranda M."/>
            <person name="Quach H.L."/>
            <person name="Tripp M."/>
            <person name="Chang C.H."/>
            <person name="Lee J.M."/>
            <person name="Toriumi M.J."/>
            <person name="Chan M.M."/>
            <person name="Tang C.C."/>
            <person name="Onodera C.S."/>
            <person name="Deng J.M."/>
            <person name="Akiyama K."/>
            <person name="Ansari Y."/>
            <person name="Arakawa T."/>
            <person name="Banh J."/>
            <person name="Banno F."/>
            <person name="Bowser L."/>
            <person name="Brooks S.Y."/>
            <person name="Carninci P."/>
            <person name="Chao Q."/>
            <person name="Choy N."/>
            <person name="Enju A."/>
            <person name="Goldsmith A.D."/>
            <person name="Gurjal M."/>
            <person name="Hansen N.F."/>
            <person name="Hayashizaki Y."/>
            <person name="Johnson-Hopson C."/>
            <person name="Hsuan V.W."/>
            <person name="Iida K."/>
            <person name="Karnes M."/>
            <person name="Khan S."/>
            <person name="Koesema E."/>
            <person name="Ishida J."/>
            <person name="Jiang P.X."/>
            <person name="Jones T."/>
            <person name="Kawai J."/>
            <person name="Kamiya A."/>
            <person name="Meyers C."/>
            <person name="Nakajima M."/>
            <person name="Narusaka M."/>
            <person name="Seki M."/>
            <person name="Sakurai T."/>
            <person name="Satou M."/>
            <person name="Tamse R."/>
            <person name="Vaysberg M."/>
            <person name="Wallender E.K."/>
            <person name="Wong C."/>
            <person name="Yamamura Y."/>
            <person name="Yuan S."/>
            <person name="Shinozaki K."/>
            <person name="Davis R.W."/>
            <person name="Theologis A."/>
            <person name="Ecker J.R."/>
        </authorList>
    </citation>
    <scope>NUCLEOTIDE SEQUENCE [LARGE SCALE MRNA]</scope>
    <source>
        <strain>cv. Columbia</strain>
    </source>
</reference>
<reference key="4">
    <citation type="submission" date="2002-03" db="EMBL/GenBank/DDBJ databases">
        <title>Full-length cDNA from Arabidopsis thaliana.</title>
        <authorList>
            <person name="Brover V.V."/>
            <person name="Troukhan M.E."/>
            <person name="Alexandrov N.A."/>
            <person name="Lu Y.-P."/>
            <person name="Flavell R.B."/>
            <person name="Feldmann K.A."/>
        </authorList>
    </citation>
    <scope>NUCLEOTIDE SEQUENCE [LARGE SCALE MRNA]</scope>
</reference>
<reference key="5">
    <citation type="journal article" date="2005" name="J. Exp. Bot.">
        <title>Co-ordinated gene expression of photosynthetic glyceraldehyde-3-phosphate dehydrogenase, phosphoribulokinase, and CP12 in Arabidopsis thaliana.</title>
        <authorList>
            <person name="Marri L."/>
            <person name="Sparla F."/>
            <person name="Pupillo P."/>
            <person name="Trost P."/>
        </authorList>
    </citation>
    <scope>TISSUE SPECIFICITY</scope>
    <scope>INDUCTION BY DARKNESS AND SUCROSE</scope>
    <source>
        <strain>cv. Columbia</strain>
    </source>
</reference>
<reference key="6">
    <citation type="journal article" date="2005" name="Plant Physiol.">
        <title>Reconstitution and properties of the recombinant glyceraldehyde-3-phosphate dehydrogenase/CP12/phosphoribulokinase supramolecular complex of Arabidopsis.</title>
        <authorList>
            <person name="Marri L."/>
            <person name="Trost P."/>
            <person name="Pupillo P."/>
            <person name="Sparla F."/>
        </authorList>
    </citation>
    <scope>FUNCTION</scope>
    <scope>SUBUNIT</scope>
    <scope>PTM</scope>
</reference>
<reference key="7">
    <citation type="journal article" date="2008" name="J. Biol. Chem.">
        <title>Spontaneous assembly of photosynthetic supramolecular complexes as mediated by the intrinsically unstructured protein CP12.</title>
        <authorList>
            <person name="Marri L."/>
            <person name="Trost P."/>
            <person name="Trivelli X."/>
            <person name="Gonnelli L."/>
            <person name="Pupillo P."/>
            <person name="Sparla F."/>
        </authorList>
    </citation>
    <scope>STRUCTURE BY NMR OF 1-131</scope>
    <scope>BIOPHYSICOCHEMICAL PROPERTIES</scope>
    <scope>SUBUNIT</scope>
    <scope>DISULFIDE BOND</scope>
    <scope>MUTAGENESIS OF CYS-75 AND CYS-126</scope>
</reference>
<reference key="8">
    <citation type="journal article" date="2008" name="J. Exp. Bot.">
        <title>Expression analysis of the Arabidopsis CP12 gene family suggests novel roles for these proteins in roots and floral tissues.</title>
        <authorList>
            <person name="Singh P."/>
            <person name="Kaloudas D."/>
            <person name="Raines C.A."/>
        </authorList>
    </citation>
    <scope>TISSUE SPECIFICITY</scope>
    <scope>DEVELOPMENTAL STAGE</scope>
    <scope>INDUCTION BY LIGHT; HEAT AND COLD</scope>
    <source>
        <strain>cv. Columbia</strain>
    </source>
</reference>
<reference key="9">
    <citation type="journal article" date="2008" name="PLoS ONE">
        <title>Sorting signals, N-terminal modifications and abundance of the chloroplast proteome.</title>
        <authorList>
            <person name="Zybailov B."/>
            <person name="Rutschow H."/>
            <person name="Friso G."/>
            <person name="Rudella A."/>
            <person name="Emanuelsson O."/>
            <person name="Sun Q."/>
            <person name="van Wijk K.J."/>
        </authorList>
    </citation>
    <scope>IDENTIFICATION BY MASS SPECTROMETRY</scope>
    <scope>SUBCELLULAR LOCATION [LARGE SCALE ANALYSIS]</scope>
</reference>
<reference key="10">
    <citation type="journal article" date="2010" name="J. Plant Physiol.">
        <title>In vitro characterization of Arabidopsis CP12 isoforms reveals common biochemical and molecular properties.</title>
        <authorList>
            <person name="Marri L."/>
            <person name="Pesaresi A."/>
            <person name="Valerio C."/>
            <person name="Lamba D."/>
            <person name="Pupillo P."/>
            <person name="Trost P."/>
            <person name="Sparla F."/>
        </authorList>
    </citation>
    <scope>FUNCTION</scope>
    <scope>SUBCELLULAR LOCATION</scope>
    <scope>SUBUNIT</scope>
    <scope>BIOPHYSICOCHEMICAL PROPERTIES</scope>
    <scope>DISULFIDE BOND</scope>
</reference>
<sequence>MATIATGLNIATQRVFVTSENRPVCLAGPVHLNNSWNLGSRTTNRMMKLQPIKAAPEGGISDVVEKSIKEAQETCAGDPVSGECVAAWDEVEELSAAASHARDKKKADGSDPLEEYCKDNPETNECRTYDN</sequence>
<dbReference type="EMBL" id="AL162507">
    <property type="protein sequence ID" value="CAB82955.1"/>
    <property type="molecule type" value="Genomic_DNA"/>
</dbReference>
<dbReference type="EMBL" id="CP002686">
    <property type="protein sequence ID" value="AEE80349.1"/>
    <property type="molecule type" value="Genomic_DNA"/>
</dbReference>
<dbReference type="EMBL" id="AY096645">
    <property type="protein sequence ID" value="AAM20142.1"/>
    <property type="molecule type" value="mRNA"/>
</dbReference>
<dbReference type="EMBL" id="AY114023">
    <property type="protein sequence ID" value="AAM45071.1"/>
    <property type="molecule type" value="mRNA"/>
</dbReference>
<dbReference type="EMBL" id="AY086744">
    <property type="protein sequence ID" value="AAM63795.1"/>
    <property type="molecule type" value="mRNA"/>
</dbReference>
<dbReference type="PIR" id="T48033">
    <property type="entry name" value="T48033"/>
</dbReference>
<dbReference type="RefSeq" id="NP_191800.1">
    <property type="nucleotide sequence ID" value="NM_116106.3"/>
</dbReference>
<dbReference type="PDB" id="2LJ9">
    <property type="method" value="NMR"/>
    <property type="chains" value="A=54-131"/>
</dbReference>
<dbReference type="PDB" id="3QV1">
    <property type="method" value="X-ray"/>
    <property type="resolution" value="2.00 A"/>
    <property type="chains" value="G/H/I=54-131"/>
</dbReference>
<dbReference type="PDB" id="3RVD">
    <property type="method" value="X-ray"/>
    <property type="resolution" value="2.70 A"/>
    <property type="chains" value="I/J/K/L/M/N=54-131"/>
</dbReference>
<dbReference type="PDB" id="6KEZ">
    <property type="method" value="X-ray"/>
    <property type="resolution" value="3.50 A"/>
    <property type="chains" value="M/N/O/P=55-131"/>
</dbReference>
<dbReference type="PDBsum" id="2LJ9"/>
<dbReference type="PDBsum" id="3QV1"/>
<dbReference type="PDBsum" id="3RVD"/>
<dbReference type="PDBsum" id="6KEZ"/>
<dbReference type="BMRB" id="Q9LZP9"/>
<dbReference type="SMR" id="Q9LZP9"/>
<dbReference type="BioGRID" id="10728">
    <property type="interactions" value="3"/>
</dbReference>
<dbReference type="FunCoup" id="Q9LZP9">
    <property type="interactions" value="727"/>
</dbReference>
<dbReference type="IntAct" id="Q9LZP9">
    <property type="interactions" value="4"/>
</dbReference>
<dbReference type="STRING" id="3702.Q9LZP9"/>
<dbReference type="PaxDb" id="3702-AT3G62410.1"/>
<dbReference type="ProteomicsDB" id="224539"/>
<dbReference type="EnsemblPlants" id="AT3G62410.1">
    <property type="protein sequence ID" value="AT3G62410.1"/>
    <property type="gene ID" value="AT3G62410"/>
</dbReference>
<dbReference type="GeneID" id="825414"/>
<dbReference type="Gramene" id="AT3G62410.1">
    <property type="protein sequence ID" value="AT3G62410.1"/>
    <property type="gene ID" value="AT3G62410"/>
</dbReference>
<dbReference type="KEGG" id="ath:AT3G62410"/>
<dbReference type="Araport" id="AT3G62410"/>
<dbReference type="TAIR" id="AT3G62410">
    <property type="gene designation" value="CP12-2"/>
</dbReference>
<dbReference type="eggNOG" id="ENOG502S5GB">
    <property type="taxonomic scope" value="Eukaryota"/>
</dbReference>
<dbReference type="HOGENOM" id="CLU_137076_0_0_1"/>
<dbReference type="InParanoid" id="Q9LZP9"/>
<dbReference type="OMA" id="AQETCAG"/>
<dbReference type="PhylomeDB" id="Q9LZP9"/>
<dbReference type="BioCyc" id="ARA:AT3G62410-MONOMER"/>
<dbReference type="BioCyc" id="MetaCyc:AT3G62410-MONOMER"/>
<dbReference type="EvolutionaryTrace" id="Q9LZP9"/>
<dbReference type="PRO" id="PR:Q9LZP9"/>
<dbReference type="Proteomes" id="UP000006548">
    <property type="component" value="Chromosome 3"/>
</dbReference>
<dbReference type="ExpressionAtlas" id="Q9LZP9">
    <property type="expression patterns" value="baseline and differential"/>
</dbReference>
<dbReference type="GO" id="GO:0009507">
    <property type="term" value="C:chloroplast"/>
    <property type="evidence" value="ECO:0000314"/>
    <property type="project" value="TAIR"/>
</dbReference>
<dbReference type="GO" id="GO:0009570">
    <property type="term" value="C:chloroplast stroma"/>
    <property type="evidence" value="ECO:0007005"/>
    <property type="project" value="TAIR"/>
</dbReference>
<dbReference type="GO" id="GO:0005829">
    <property type="term" value="C:cytosol"/>
    <property type="evidence" value="ECO:0007005"/>
    <property type="project" value="TAIR"/>
</dbReference>
<dbReference type="GO" id="GO:0032991">
    <property type="term" value="C:protein-containing complex"/>
    <property type="evidence" value="ECO:0000314"/>
    <property type="project" value="UniProtKB"/>
</dbReference>
<dbReference type="GO" id="GO:0099080">
    <property type="term" value="C:supramolecular complex"/>
    <property type="evidence" value="ECO:0000314"/>
    <property type="project" value="CAFA"/>
</dbReference>
<dbReference type="GO" id="GO:0005507">
    <property type="term" value="F:copper ion binding"/>
    <property type="evidence" value="ECO:0000250"/>
    <property type="project" value="UniProtKB"/>
</dbReference>
<dbReference type="GO" id="GO:0019899">
    <property type="term" value="F:enzyme binding"/>
    <property type="evidence" value="ECO:0000353"/>
    <property type="project" value="CAFA"/>
</dbReference>
<dbReference type="GO" id="GO:0016151">
    <property type="term" value="F:nickel cation binding"/>
    <property type="evidence" value="ECO:0000250"/>
    <property type="project" value="UniProtKB"/>
</dbReference>
<dbReference type="GO" id="GO:0044877">
    <property type="term" value="F:protein-containing complex binding"/>
    <property type="evidence" value="ECO:0000314"/>
    <property type="project" value="CAFA"/>
</dbReference>
<dbReference type="GO" id="GO:0030674">
    <property type="term" value="F:protein-macromolecule adaptor activity"/>
    <property type="evidence" value="ECO:0000353"/>
    <property type="project" value="CAFA"/>
</dbReference>
<dbReference type="GO" id="GO:0071454">
    <property type="term" value="P:cellular response to anoxia"/>
    <property type="evidence" value="ECO:0000270"/>
    <property type="project" value="UniProtKB"/>
</dbReference>
<dbReference type="GO" id="GO:0070417">
    <property type="term" value="P:cellular response to cold"/>
    <property type="evidence" value="ECO:0000270"/>
    <property type="project" value="UniProtKB"/>
</dbReference>
<dbReference type="GO" id="GO:0034605">
    <property type="term" value="P:cellular response to heat"/>
    <property type="evidence" value="ECO:0000270"/>
    <property type="project" value="UniProtKB"/>
</dbReference>
<dbReference type="GO" id="GO:0080153">
    <property type="term" value="P:negative regulation of reductive pentose-phosphate cycle"/>
    <property type="evidence" value="ECO:0000314"/>
    <property type="project" value="TAIR"/>
</dbReference>
<dbReference type="GO" id="GO:0018316">
    <property type="term" value="P:peptide cross-linking via L-cystine"/>
    <property type="evidence" value="ECO:0000304"/>
    <property type="project" value="TAIR"/>
</dbReference>
<dbReference type="GO" id="GO:0065003">
    <property type="term" value="P:protein-containing complex assembly"/>
    <property type="evidence" value="ECO:0000314"/>
    <property type="project" value="CAFA"/>
</dbReference>
<dbReference type="GO" id="GO:0019253">
    <property type="term" value="P:reductive pentose-phosphate cycle"/>
    <property type="evidence" value="ECO:0000304"/>
    <property type="project" value="TAIR"/>
</dbReference>
<dbReference type="GO" id="GO:0009416">
    <property type="term" value="P:response to light stimulus"/>
    <property type="evidence" value="ECO:0000270"/>
    <property type="project" value="UniProtKB"/>
</dbReference>
<dbReference type="GO" id="GO:0009744">
    <property type="term" value="P:response to sucrose"/>
    <property type="evidence" value="ECO:0000270"/>
    <property type="project" value="TAIR"/>
</dbReference>
<dbReference type="DisProt" id="DP00534"/>
<dbReference type="InterPro" id="IPR039314">
    <property type="entry name" value="CP12-like"/>
</dbReference>
<dbReference type="InterPro" id="IPR003823">
    <property type="entry name" value="CP12_dom"/>
</dbReference>
<dbReference type="PANTHER" id="PTHR33921">
    <property type="entry name" value="CALVIN CYCLE PROTEIN CP12-2, CHLOROPLASTIC"/>
    <property type="match status" value="1"/>
</dbReference>
<dbReference type="PANTHER" id="PTHR33921:SF15">
    <property type="entry name" value="CALVIN CYCLE PROTEIN CP12-2, CHLOROPLASTIC"/>
    <property type="match status" value="1"/>
</dbReference>
<dbReference type="Pfam" id="PF02672">
    <property type="entry name" value="CP12"/>
    <property type="match status" value="1"/>
</dbReference>
<dbReference type="SMART" id="SM01093">
    <property type="entry name" value="CP12"/>
    <property type="match status" value="1"/>
</dbReference>
<evidence type="ECO:0000250" key="1"/>
<evidence type="ECO:0000256" key="2">
    <source>
        <dbReference type="SAM" id="MobiDB-lite"/>
    </source>
</evidence>
<evidence type="ECO:0000269" key="3">
    <source>
    </source>
</evidence>
<evidence type="ECO:0000269" key="4">
    <source>
    </source>
</evidence>
<evidence type="ECO:0000269" key="5">
    <source>
    </source>
</evidence>
<evidence type="ECO:0000269" key="6">
    <source>
    </source>
</evidence>
<evidence type="ECO:0000269" key="7">
    <source>
    </source>
</evidence>
<evidence type="ECO:0000269" key="8">
    <source>
    </source>
</evidence>
<evidence type="ECO:0000305" key="9"/>
<evidence type="ECO:0007829" key="10">
    <source>
        <dbReference type="PDB" id="3QV1"/>
    </source>
</evidence>
<evidence type="ECO:0007829" key="11">
    <source>
        <dbReference type="PDB" id="6KEZ"/>
    </source>
</evidence>
<organism>
    <name type="scientific">Arabidopsis thaliana</name>
    <name type="common">Mouse-ear cress</name>
    <dbReference type="NCBI Taxonomy" id="3702"/>
    <lineage>
        <taxon>Eukaryota</taxon>
        <taxon>Viridiplantae</taxon>
        <taxon>Streptophyta</taxon>
        <taxon>Embryophyta</taxon>
        <taxon>Tracheophyta</taxon>
        <taxon>Spermatophyta</taxon>
        <taxon>Magnoliopsida</taxon>
        <taxon>eudicotyledons</taxon>
        <taxon>Gunneridae</taxon>
        <taxon>Pentapetalae</taxon>
        <taxon>rosids</taxon>
        <taxon>malvids</taxon>
        <taxon>Brassicales</taxon>
        <taxon>Brassicaceae</taxon>
        <taxon>Camelineae</taxon>
        <taxon>Arabidopsis</taxon>
    </lineage>
</organism>
<comment type="function">
    <text evidence="4 8">Acts as a linker essential in the assembly of a core complex of PRK/GAPDH. Coordinates the reversible inactivation of chloroplast enzymes GAPDH and PRK during darkness in photosynthetic tissues.</text>
</comment>
<comment type="biophysicochemical properties">
    <redoxPotential>
        <text evidence="5 8">E(0) are -326 mV and -352 mV for the disulfide bonds at pH 7.9.</text>
    </redoxPotential>
</comment>
<comment type="subunit">
    <text evidence="4 5 8">Monomer. Component of a complex that contains two dimers of PRK, two tetramers of GAPDH and CP12. CP12 associates with GAPDH, causing its conformation to change. This GAPDH/CP12 complex binds PRK to form a half-complex (one unit). This unit probably dimerizes due partially to interactions between the enzymes of each unit.</text>
</comment>
<comment type="interaction">
    <interactant intactId="EBI-449218">
        <id>Q9LZP9</id>
    </interactant>
    <interactant intactId="EBI-1554434">
        <id>P25856</id>
        <label>GAPA1</label>
    </interactant>
    <organismsDiffer>false</organismsDiffer>
    <experiments>4</experiments>
</comment>
<comment type="subcellular location">
    <subcellularLocation>
        <location evidence="6 8">Plastid</location>
        <location evidence="6 8">Chloroplast</location>
    </subcellularLocation>
</comment>
<comment type="tissue specificity">
    <text evidence="3 7">Mostly expressed in cotyledons, leaves and flower stalks, and, to a lower extent, in flowers and stems. Barely detectable in roots and siliques.</text>
</comment>
<comment type="developmental stage">
    <text evidence="7">In flowers, expressed in the sepals and the style. In siliques, present at the base and tip.</text>
</comment>
<comment type="induction">
    <text evidence="3 7">Induced by light. Repressed by darkness, cold, anaerobic treatment, heat and sucrose. Changes conformation depending on redox conditions.</text>
</comment>
<comment type="PTM">
    <text>Contains two disulfide bonds; only the oxidized protein, with two disulfide bonds, is active in complex formation. The C-terminal disulfide is involved in the interaction with GAPDH and the N-terminal disulfide mediates the binding of PRK with this binary complex.</text>
</comment>
<comment type="miscellaneous">
    <text evidence="1">Binds copper and nickel ions. Copper ions catalyze the oxidation of reduced thiol groups and thus promote formation of the disulfide bonds required for linker activity (By similarity).</text>
</comment>
<comment type="similarity">
    <text evidence="9">Belongs to the CP12 family.</text>
</comment>
<feature type="transit peptide" description="Chloroplast" evidence="9">
    <location>
        <begin position="1"/>
        <end position="53"/>
    </location>
</feature>
<feature type="chain" id="PRO_0000417431" description="Calvin cycle protein CP12-2, chloroplastic">
    <location>
        <begin position="54"/>
        <end position="131"/>
    </location>
</feature>
<feature type="region of interest" description="Disordered" evidence="2">
    <location>
        <begin position="97"/>
        <end position="131"/>
    </location>
</feature>
<feature type="compositionally biased region" description="Basic and acidic residues" evidence="2">
    <location>
        <begin position="105"/>
        <end position="131"/>
    </location>
</feature>
<feature type="disulfide bond">
    <location>
        <begin position="75"/>
        <end position="84"/>
    </location>
</feature>
<feature type="disulfide bond">
    <location>
        <begin position="117"/>
        <end position="126"/>
    </location>
</feature>
<feature type="mutagenesis site" description="Normal under reducing conditions, but can form dimers under oxidizing conditions. Impaired formation of a ternary complex with PRK." evidence="5">
    <original>C</original>
    <variation>S</variation>
    <location>
        <position position="75"/>
    </location>
</feature>
<feature type="mutagenesis site" description="Normal under reducing conditions, but can form dimers under oxidizing conditions. Impaired interaction with GAPDH and loss of formation of a ternary complex with PRK." evidence="5">
    <original>C</original>
    <variation>S</variation>
    <location>
        <position position="126"/>
    </location>
</feature>
<feature type="sequence conflict" description="In Ref. 4; AAM63795." evidence="9" ref="4">
    <original>V</original>
    <variation>I</variation>
    <location>
        <position position="85"/>
    </location>
</feature>
<feature type="helix" evidence="11">
    <location>
        <begin position="60"/>
        <end position="74"/>
    </location>
</feature>
<feature type="turn" evidence="11">
    <location>
        <begin position="81"/>
        <end position="84"/>
    </location>
</feature>
<feature type="helix" evidence="11">
    <location>
        <begin position="85"/>
        <end position="110"/>
    </location>
</feature>
<feature type="helix" evidence="10">
    <location>
        <begin position="112"/>
        <end position="119"/>
    </location>
</feature>
<feature type="turn" evidence="10">
    <location>
        <begin position="124"/>
        <end position="126"/>
    </location>
</feature>
<keyword id="KW-0002">3D-structure</keyword>
<keyword id="KW-0113">Calvin cycle</keyword>
<keyword id="KW-0150">Chloroplast</keyword>
<keyword id="KW-0186">Copper</keyword>
<keyword id="KW-1015">Disulfide bond</keyword>
<keyword id="KW-0533">Nickel</keyword>
<keyword id="KW-0934">Plastid</keyword>
<keyword id="KW-1185">Reference proteome</keyword>
<keyword id="KW-0809">Transit peptide</keyword>
<gene>
    <name type="primary">CP12-2</name>
    <name type="ordered locus">At3g62410</name>
    <name type="ORF">T12C14.110</name>
</gene>
<accession>Q9LZP9</accession>
<accession>Q8LC81</accession>
<name>CP122_ARATH</name>
<protein>
    <recommendedName>
        <fullName>Calvin cycle protein CP12-2, chloroplastic</fullName>
    </recommendedName>
    <alternativeName>
        <fullName>CP12 domain-containing protein 2</fullName>
    </alternativeName>
    <alternativeName>
        <fullName>Chloroplast protein 12-2</fullName>
    </alternativeName>
</protein>